<protein>
    <recommendedName>
        <fullName evidence="1">UPF0180 protein BCAH820_1484</fullName>
    </recommendedName>
</protein>
<evidence type="ECO:0000255" key="1">
    <source>
        <dbReference type="HAMAP-Rule" id="MF_00506"/>
    </source>
</evidence>
<proteinExistence type="inferred from homology"/>
<name>Y1484_BACC0</name>
<accession>B7JFX8</accession>
<organism>
    <name type="scientific">Bacillus cereus (strain AH820)</name>
    <dbReference type="NCBI Taxonomy" id="405535"/>
    <lineage>
        <taxon>Bacteria</taxon>
        <taxon>Bacillati</taxon>
        <taxon>Bacillota</taxon>
        <taxon>Bacilli</taxon>
        <taxon>Bacillales</taxon>
        <taxon>Bacillaceae</taxon>
        <taxon>Bacillus</taxon>
        <taxon>Bacillus cereus group</taxon>
    </lineage>
</organism>
<sequence length="79" mass="8352">MARIGVENSLTDVQQALKQQGHEVVTLNSEQDAQGCDCCVVTGQDSNMMGIADASIKGSVITAHGLTTDDICQQVESRT</sequence>
<gene>
    <name type="ordered locus">BCAH820_1484</name>
</gene>
<reference key="1">
    <citation type="submission" date="2008-10" db="EMBL/GenBank/DDBJ databases">
        <title>Genome sequence of Bacillus cereus AH820.</title>
        <authorList>
            <person name="Dodson R.J."/>
            <person name="Durkin A.S."/>
            <person name="Rosovitz M.J."/>
            <person name="Rasko D.A."/>
            <person name="Hoffmaster A."/>
            <person name="Ravel J."/>
            <person name="Sutton G."/>
        </authorList>
    </citation>
    <scope>NUCLEOTIDE SEQUENCE [LARGE SCALE GENOMIC DNA]</scope>
    <source>
        <strain>AH820</strain>
    </source>
</reference>
<dbReference type="EMBL" id="CP001283">
    <property type="protein sequence ID" value="ACK91747.1"/>
    <property type="molecule type" value="Genomic_DNA"/>
</dbReference>
<dbReference type="RefSeq" id="WP_000101005.1">
    <property type="nucleotide sequence ID" value="NC_011773.1"/>
</dbReference>
<dbReference type="KEGG" id="bcu:BCAH820_1484"/>
<dbReference type="HOGENOM" id="CLU_187365_0_0_9"/>
<dbReference type="Proteomes" id="UP000001363">
    <property type="component" value="Chromosome"/>
</dbReference>
<dbReference type="HAMAP" id="MF_00506">
    <property type="entry name" value="UPF0180"/>
    <property type="match status" value="1"/>
</dbReference>
<dbReference type="InterPro" id="IPR005370">
    <property type="entry name" value="UPF0180"/>
</dbReference>
<dbReference type="NCBIfam" id="NF002845">
    <property type="entry name" value="PRK03094.1"/>
    <property type="match status" value="1"/>
</dbReference>
<dbReference type="Pfam" id="PF03698">
    <property type="entry name" value="UPF0180"/>
    <property type="match status" value="1"/>
</dbReference>
<comment type="similarity">
    <text evidence="1">Belongs to the UPF0180 family.</text>
</comment>
<feature type="chain" id="PRO_1000197843" description="UPF0180 protein BCAH820_1484">
    <location>
        <begin position="1"/>
        <end position="79"/>
    </location>
</feature>